<gene>
    <name evidence="1" type="primary">dxs</name>
    <name type="ordered locus">DSY2348</name>
</gene>
<protein>
    <recommendedName>
        <fullName evidence="1">1-deoxy-D-xylulose-5-phosphate synthase</fullName>
        <ecNumber evidence="1">2.2.1.7</ecNumber>
    </recommendedName>
    <alternativeName>
        <fullName evidence="1">1-deoxyxylulose-5-phosphate synthase</fullName>
        <shortName evidence="1">DXP synthase</shortName>
        <shortName evidence="1">DXPS</shortName>
    </alternativeName>
</protein>
<sequence length="631" mass="69321">MGILAKIEQPRDLKGLTYPELEQLAQEIRAEMIDVVSANGGHLAPNLGVVELTLALHRVFDSPKDKIIWDVGHQSYVHKLVTGRQKEFKSLRLYKGLSGFPKRCESPHDCFETGHSSTSISAAVGFAKARDLRKEKNQVVAVIGDGAMTGGMAFEALNHAGHTKTNMIVVLNDNEMAIAQNVGAMSSYLNRLRTDPRYDRSKDEIENLLKRIPGIGSKMAKAAEKAKDSLKYLLVPGLLFEEMGFTYLGPVNGHDQIALEQVFEQAKMVKEPVLVHVLTQKGRGYEPSEKNPALFHGVGPFNKVTGEVIKKPAPPTYTQVFGETLCELAEKDPRITAITAAMPSGTGLNLFAQKFPDRFFDVGIAEQHAVTFSAALAFGGMKPVVSIYSTFYQRAYDQVLHDVCLPHANVVMAIDRAGVVGDDGPTHHGVFDISFLRVIPNLVFMAPKDENELRHMLYTSLQLDGPVALRYPRSVGQGVELTEELRELPVGKAEILQEGKDITLIGVGPMVYTCLAAAVELRHRGVEATVINLRYINPLDRESILRYARMTKRIITVEDHMLAGGMGSAVMEVLGDEGLTDVVVERLGYDEYVDQGAISLLHQGYGLSVVGILKAAERLKVLQRIEGRSSV</sequence>
<comment type="function">
    <text evidence="1">Catalyzes the acyloin condensation reaction between C atoms 2 and 3 of pyruvate and glyceraldehyde 3-phosphate to yield 1-deoxy-D-xylulose-5-phosphate (DXP).</text>
</comment>
<comment type="catalytic activity">
    <reaction evidence="1">
        <text>D-glyceraldehyde 3-phosphate + pyruvate + H(+) = 1-deoxy-D-xylulose 5-phosphate + CO2</text>
        <dbReference type="Rhea" id="RHEA:12605"/>
        <dbReference type="ChEBI" id="CHEBI:15361"/>
        <dbReference type="ChEBI" id="CHEBI:15378"/>
        <dbReference type="ChEBI" id="CHEBI:16526"/>
        <dbReference type="ChEBI" id="CHEBI:57792"/>
        <dbReference type="ChEBI" id="CHEBI:59776"/>
        <dbReference type="EC" id="2.2.1.7"/>
    </reaction>
</comment>
<comment type="cofactor">
    <cofactor evidence="1">
        <name>Mg(2+)</name>
        <dbReference type="ChEBI" id="CHEBI:18420"/>
    </cofactor>
    <text evidence="1">Binds 1 Mg(2+) ion per subunit.</text>
</comment>
<comment type="cofactor">
    <cofactor evidence="1">
        <name>thiamine diphosphate</name>
        <dbReference type="ChEBI" id="CHEBI:58937"/>
    </cofactor>
    <text evidence="1">Binds 1 thiamine pyrophosphate per subunit.</text>
</comment>
<comment type="pathway">
    <text evidence="1">Metabolic intermediate biosynthesis; 1-deoxy-D-xylulose 5-phosphate biosynthesis; 1-deoxy-D-xylulose 5-phosphate from D-glyceraldehyde 3-phosphate and pyruvate: step 1/1.</text>
</comment>
<comment type="subunit">
    <text evidence="1">Homodimer.</text>
</comment>
<comment type="similarity">
    <text evidence="1">Belongs to the transketolase family. DXPS subfamily.</text>
</comment>
<proteinExistence type="inferred from homology"/>
<name>DXS_DESHY</name>
<keyword id="KW-0414">Isoprene biosynthesis</keyword>
<keyword id="KW-0460">Magnesium</keyword>
<keyword id="KW-0479">Metal-binding</keyword>
<keyword id="KW-1185">Reference proteome</keyword>
<keyword id="KW-0784">Thiamine biosynthesis</keyword>
<keyword id="KW-0786">Thiamine pyrophosphate</keyword>
<keyword id="KW-0808">Transferase</keyword>
<organism>
    <name type="scientific">Desulfitobacterium hafniense (strain Y51)</name>
    <dbReference type="NCBI Taxonomy" id="138119"/>
    <lineage>
        <taxon>Bacteria</taxon>
        <taxon>Bacillati</taxon>
        <taxon>Bacillota</taxon>
        <taxon>Clostridia</taxon>
        <taxon>Eubacteriales</taxon>
        <taxon>Desulfitobacteriaceae</taxon>
        <taxon>Desulfitobacterium</taxon>
    </lineage>
</organism>
<dbReference type="EC" id="2.2.1.7" evidence="1"/>
<dbReference type="EMBL" id="AP008230">
    <property type="protein sequence ID" value="BAE84137.1"/>
    <property type="molecule type" value="Genomic_DNA"/>
</dbReference>
<dbReference type="RefSeq" id="WP_011460263.1">
    <property type="nucleotide sequence ID" value="NC_007907.1"/>
</dbReference>
<dbReference type="SMR" id="Q24V05"/>
<dbReference type="STRING" id="138119.DSY2348"/>
<dbReference type="KEGG" id="dsy:DSY2348"/>
<dbReference type="eggNOG" id="COG1154">
    <property type="taxonomic scope" value="Bacteria"/>
</dbReference>
<dbReference type="HOGENOM" id="CLU_009227_1_4_9"/>
<dbReference type="UniPathway" id="UPA00064">
    <property type="reaction ID" value="UER00091"/>
</dbReference>
<dbReference type="Proteomes" id="UP000001946">
    <property type="component" value="Chromosome"/>
</dbReference>
<dbReference type="GO" id="GO:0005829">
    <property type="term" value="C:cytosol"/>
    <property type="evidence" value="ECO:0007669"/>
    <property type="project" value="TreeGrafter"/>
</dbReference>
<dbReference type="GO" id="GO:0008661">
    <property type="term" value="F:1-deoxy-D-xylulose-5-phosphate synthase activity"/>
    <property type="evidence" value="ECO:0007669"/>
    <property type="project" value="UniProtKB-UniRule"/>
</dbReference>
<dbReference type="GO" id="GO:0000287">
    <property type="term" value="F:magnesium ion binding"/>
    <property type="evidence" value="ECO:0007669"/>
    <property type="project" value="UniProtKB-UniRule"/>
</dbReference>
<dbReference type="GO" id="GO:0030976">
    <property type="term" value="F:thiamine pyrophosphate binding"/>
    <property type="evidence" value="ECO:0007669"/>
    <property type="project" value="UniProtKB-UniRule"/>
</dbReference>
<dbReference type="GO" id="GO:0052865">
    <property type="term" value="P:1-deoxy-D-xylulose 5-phosphate biosynthetic process"/>
    <property type="evidence" value="ECO:0007669"/>
    <property type="project" value="UniProtKB-UniPathway"/>
</dbReference>
<dbReference type="GO" id="GO:0019288">
    <property type="term" value="P:isopentenyl diphosphate biosynthetic process, methylerythritol 4-phosphate pathway"/>
    <property type="evidence" value="ECO:0007669"/>
    <property type="project" value="TreeGrafter"/>
</dbReference>
<dbReference type="GO" id="GO:0016114">
    <property type="term" value="P:terpenoid biosynthetic process"/>
    <property type="evidence" value="ECO:0007669"/>
    <property type="project" value="UniProtKB-UniRule"/>
</dbReference>
<dbReference type="GO" id="GO:0009228">
    <property type="term" value="P:thiamine biosynthetic process"/>
    <property type="evidence" value="ECO:0007669"/>
    <property type="project" value="UniProtKB-UniRule"/>
</dbReference>
<dbReference type="CDD" id="cd02007">
    <property type="entry name" value="TPP_DXS"/>
    <property type="match status" value="1"/>
</dbReference>
<dbReference type="CDD" id="cd07033">
    <property type="entry name" value="TPP_PYR_DXS_TK_like"/>
    <property type="match status" value="1"/>
</dbReference>
<dbReference type="FunFam" id="3.40.50.970:FF:000005">
    <property type="entry name" value="1-deoxy-D-xylulose-5-phosphate synthase"/>
    <property type="match status" value="1"/>
</dbReference>
<dbReference type="Gene3D" id="3.40.50.920">
    <property type="match status" value="1"/>
</dbReference>
<dbReference type="Gene3D" id="3.40.50.970">
    <property type="match status" value="2"/>
</dbReference>
<dbReference type="HAMAP" id="MF_00315">
    <property type="entry name" value="DXP_synth"/>
    <property type="match status" value="1"/>
</dbReference>
<dbReference type="InterPro" id="IPR005477">
    <property type="entry name" value="Dxylulose-5-P_synthase"/>
</dbReference>
<dbReference type="InterPro" id="IPR029061">
    <property type="entry name" value="THDP-binding"/>
</dbReference>
<dbReference type="InterPro" id="IPR009014">
    <property type="entry name" value="Transketo_C/PFOR_II"/>
</dbReference>
<dbReference type="InterPro" id="IPR005475">
    <property type="entry name" value="Transketolase-like_Pyr-bd"/>
</dbReference>
<dbReference type="InterPro" id="IPR020826">
    <property type="entry name" value="Transketolase_BS"/>
</dbReference>
<dbReference type="InterPro" id="IPR033248">
    <property type="entry name" value="Transketolase_C"/>
</dbReference>
<dbReference type="InterPro" id="IPR049557">
    <property type="entry name" value="Transketolase_CS"/>
</dbReference>
<dbReference type="NCBIfam" id="TIGR00204">
    <property type="entry name" value="dxs"/>
    <property type="match status" value="1"/>
</dbReference>
<dbReference type="NCBIfam" id="NF003933">
    <property type="entry name" value="PRK05444.2-2"/>
    <property type="match status" value="1"/>
</dbReference>
<dbReference type="PANTHER" id="PTHR43322">
    <property type="entry name" value="1-D-DEOXYXYLULOSE 5-PHOSPHATE SYNTHASE-RELATED"/>
    <property type="match status" value="1"/>
</dbReference>
<dbReference type="PANTHER" id="PTHR43322:SF5">
    <property type="entry name" value="1-DEOXY-D-XYLULOSE-5-PHOSPHATE SYNTHASE, CHLOROPLASTIC"/>
    <property type="match status" value="1"/>
</dbReference>
<dbReference type="Pfam" id="PF13292">
    <property type="entry name" value="DXP_synthase_N"/>
    <property type="match status" value="1"/>
</dbReference>
<dbReference type="Pfam" id="PF02779">
    <property type="entry name" value="Transket_pyr"/>
    <property type="match status" value="1"/>
</dbReference>
<dbReference type="Pfam" id="PF02780">
    <property type="entry name" value="Transketolase_C"/>
    <property type="match status" value="1"/>
</dbReference>
<dbReference type="SMART" id="SM00861">
    <property type="entry name" value="Transket_pyr"/>
    <property type="match status" value="1"/>
</dbReference>
<dbReference type="SUPFAM" id="SSF52518">
    <property type="entry name" value="Thiamin diphosphate-binding fold (THDP-binding)"/>
    <property type="match status" value="2"/>
</dbReference>
<dbReference type="SUPFAM" id="SSF52922">
    <property type="entry name" value="TK C-terminal domain-like"/>
    <property type="match status" value="1"/>
</dbReference>
<dbReference type="PROSITE" id="PS00801">
    <property type="entry name" value="TRANSKETOLASE_1"/>
    <property type="match status" value="1"/>
</dbReference>
<dbReference type="PROSITE" id="PS00802">
    <property type="entry name" value="TRANSKETOLASE_2"/>
    <property type="match status" value="1"/>
</dbReference>
<reference key="1">
    <citation type="journal article" date="2006" name="J. Bacteriol.">
        <title>Complete genome sequence of the dehalorespiring bacterium Desulfitobacterium hafniense Y51 and comparison with Dehalococcoides ethenogenes 195.</title>
        <authorList>
            <person name="Nonaka H."/>
            <person name="Keresztes G."/>
            <person name="Shinoda Y."/>
            <person name="Ikenaga Y."/>
            <person name="Abe M."/>
            <person name="Naito K."/>
            <person name="Inatomi K."/>
            <person name="Furukawa K."/>
            <person name="Inui M."/>
            <person name="Yukawa H."/>
        </authorList>
    </citation>
    <scope>NUCLEOTIDE SEQUENCE [LARGE SCALE GENOMIC DNA]</scope>
    <source>
        <strain>Y51</strain>
    </source>
</reference>
<accession>Q24V05</accession>
<feature type="chain" id="PRO_0000256412" description="1-deoxy-D-xylulose-5-phosphate synthase">
    <location>
        <begin position="1"/>
        <end position="631"/>
    </location>
</feature>
<feature type="binding site" evidence="1">
    <location>
        <position position="73"/>
    </location>
    <ligand>
        <name>thiamine diphosphate</name>
        <dbReference type="ChEBI" id="CHEBI:58937"/>
    </ligand>
</feature>
<feature type="binding site" evidence="1">
    <location>
        <begin position="114"/>
        <end position="116"/>
    </location>
    <ligand>
        <name>thiamine diphosphate</name>
        <dbReference type="ChEBI" id="CHEBI:58937"/>
    </ligand>
</feature>
<feature type="binding site" evidence="1">
    <location>
        <position position="145"/>
    </location>
    <ligand>
        <name>Mg(2+)</name>
        <dbReference type="ChEBI" id="CHEBI:18420"/>
    </ligand>
</feature>
<feature type="binding site" evidence="1">
    <location>
        <begin position="146"/>
        <end position="147"/>
    </location>
    <ligand>
        <name>thiamine diphosphate</name>
        <dbReference type="ChEBI" id="CHEBI:58937"/>
    </ligand>
</feature>
<feature type="binding site" evidence="1">
    <location>
        <position position="174"/>
    </location>
    <ligand>
        <name>Mg(2+)</name>
        <dbReference type="ChEBI" id="CHEBI:18420"/>
    </ligand>
</feature>
<feature type="binding site" evidence="1">
    <location>
        <position position="174"/>
    </location>
    <ligand>
        <name>thiamine diphosphate</name>
        <dbReference type="ChEBI" id="CHEBI:58937"/>
    </ligand>
</feature>
<feature type="binding site" evidence="1">
    <location>
        <position position="285"/>
    </location>
    <ligand>
        <name>thiamine diphosphate</name>
        <dbReference type="ChEBI" id="CHEBI:58937"/>
    </ligand>
</feature>
<feature type="binding site" evidence="1">
    <location>
        <position position="366"/>
    </location>
    <ligand>
        <name>thiamine diphosphate</name>
        <dbReference type="ChEBI" id="CHEBI:58937"/>
    </ligand>
</feature>
<evidence type="ECO:0000255" key="1">
    <source>
        <dbReference type="HAMAP-Rule" id="MF_00315"/>
    </source>
</evidence>